<name>ARGC_RUEPO</name>
<dbReference type="EC" id="1.2.1.38" evidence="1"/>
<dbReference type="EMBL" id="CP000031">
    <property type="protein sequence ID" value="AAV95155.1"/>
    <property type="molecule type" value="Genomic_DNA"/>
</dbReference>
<dbReference type="RefSeq" id="WP_011047609.1">
    <property type="nucleotide sequence ID" value="NC_003911.12"/>
</dbReference>
<dbReference type="SMR" id="Q5LS92"/>
<dbReference type="STRING" id="246200.SPO1876"/>
<dbReference type="PaxDb" id="246200-SPO1876"/>
<dbReference type="KEGG" id="sil:SPO1876"/>
<dbReference type="eggNOG" id="COG0002">
    <property type="taxonomic scope" value="Bacteria"/>
</dbReference>
<dbReference type="HOGENOM" id="CLU_006384_0_1_5"/>
<dbReference type="OrthoDB" id="9801289at2"/>
<dbReference type="UniPathway" id="UPA00068">
    <property type="reaction ID" value="UER00108"/>
</dbReference>
<dbReference type="Proteomes" id="UP000001023">
    <property type="component" value="Chromosome"/>
</dbReference>
<dbReference type="GO" id="GO:0005737">
    <property type="term" value="C:cytoplasm"/>
    <property type="evidence" value="ECO:0007669"/>
    <property type="project" value="UniProtKB-SubCell"/>
</dbReference>
<dbReference type="GO" id="GO:0003942">
    <property type="term" value="F:N-acetyl-gamma-glutamyl-phosphate reductase activity"/>
    <property type="evidence" value="ECO:0007669"/>
    <property type="project" value="UniProtKB-UniRule"/>
</dbReference>
<dbReference type="GO" id="GO:0051287">
    <property type="term" value="F:NAD binding"/>
    <property type="evidence" value="ECO:0007669"/>
    <property type="project" value="InterPro"/>
</dbReference>
<dbReference type="GO" id="GO:0070401">
    <property type="term" value="F:NADP+ binding"/>
    <property type="evidence" value="ECO:0007669"/>
    <property type="project" value="InterPro"/>
</dbReference>
<dbReference type="GO" id="GO:0006526">
    <property type="term" value="P:L-arginine biosynthetic process"/>
    <property type="evidence" value="ECO:0007669"/>
    <property type="project" value="UniProtKB-UniRule"/>
</dbReference>
<dbReference type="CDD" id="cd23934">
    <property type="entry name" value="AGPR_1_C"/>
    <property type="match status" value="1"/>
</dbReference>
<dbReference type="CDD" id="cd17895">
    <property type="entry name" value="AGPR_1_N"/>
    <property type="match status" value="1"/>
</dbReference>
<dbReference type="Gene3D" id="3.30.360.10">
    <property type="entry name" value="Dihydrodipicolinate Reductase, domain 2"/>
    <property type="match status" value="1"/>
</dbReference>
<dbReference type="Gene3D" id="3.40.50.720">
    <property type="entry name" value="NAD(P)-binding Rossmann-like Domain"/>
    <property type="match status" value="1"/>
</dbReference>
<dbReference type="HAMAP" id="MF_00150">
    <property type="entry name" value="ArgC_type1"/>
    <property type="match status" value="1"/>
</dbReference>
<dbReference type="InterPro" id="IPR000706">
    <property type="entry name" value="AGPR_type-1"/>
</dbReference>
<dbReference type="InterPro" id="IPR036291">
    <property type="entry name" value="NAD(P)-bd_dom_sf"/>
</dbReference>
<dbReference type="InterPro" id="IPR050085">
    <property type="entry name" value="NAGSA_dehydrogenase"/>
</dbReference>
<dbReference type="InterPro" id="IPR000534">
    <property type="entry name" value="Semialdehyde_DH_NAD-bd"/>
</dbReference>
<dbReference type="NCBIfam" id="TIGR01850">
    <property type="entry name" value="argC"/>
    <property type="match status" value="1"/>
</dbReference>
<dbReference type="PANTHER" id="PTHR32338:SF10">
    <property type="entry name" value="N-ACETYL-GAMMA-GLUTAMYL-PHOSPHATE REDUCTASE, CHLOROPLASTIC-RELATED"/>
    <property type="match status" value="1"/>
</dbReference>
<dbReference type="PANTHER" id="PTHR32338">
    <property type="entry name" value="N-ACETYL-GAMMA-GLUTAMYL-PHOSPHATE REDUCTASE, CHLOROPLASTIC-RELATED-RELATED"/>
    <property type="match status" value="1"/>
</dbReference>
<dbReference type="Pfam" id="PF01118">
    <property type="entry name" value="Semialdhyde_dh"/>
    <property type="match status" value="1"/>
</dbReference>
<dbReference type="Pfam" id="PF22698">
    <property type="entry name" value="Semialdhyde_dhC_1"/>
    <property type="match status" value="1"/>
</dbReference>
<dbReference type="SMART" id="SM00859">
    <property type="entry name" value="Semialdhyde_dh"/>
    <property type="match status" value="1"/>
</dbReference>
<dbReference type="SUPFAM" id="SSF55347">
    <property type="entry name" value="Glyceraldehyde-3-phosphate dehydrogenase-like, C-terminal domain"/>
    <property type="match status" value="1"/>
</dbReference>
<dbReference type="SUPFAM" id="SSF51735">
    <property type="entry name" value="NAD(P)-binding Rossmann-fold domains"/>
    <property type="match status" value="1"/>
</dbReference>
<comment type="function">
    <text evidence="1">Catalyzes the NADPH-dependent reduction of N-acetyl-5-glutamyl phosphate to yield N-acetyl-L-glutamate 5-semialdehyde.</text>
</comment>
<comment type="catalytic activity">
    <reaction evidence="1">
        <text>N-acetyl-L-glutamate 5-semialdehyde + phosphate + NADP(+) = N-acetyl-L-glutamyl 5-phosphate + NADPH + H(+)</text>
        <dbReference type="Rhea" id="RHEA:21588"/>
        <dbReference type="ChEBI" id="CHEBI:15378"/>
        <dbReference type="ChEBI" id="CHEBI:29123"/>
        <dbReference type="ChEBI" id="CHEBI:43474"/>
        <dbReference type="ChEBI" id="CHEBI:57783"/>
        <dbReference type="ChEBI" id="CHEBI:57936"/>
        <dbReference type="ChEBI" id="CHEBI:58349"/>
        <dbReference type="EC" id="1.2.1.38"/>
    </reaction>
</comment>
<comment type="pathway">
    <text evidence="1">Amino-acid biosynthesis; L-arginine biosynthesis; N(2)-acetyl-L-ornithine from L-glutamate: step 3/4.</text>
</comment>
<comment type="subcellular location">
    <subcellularLocation>
        <location evidence="1">Cytoplasm</location>
    </subcellularLocation>
</comment>
<comment type="similarity">
    <text evidence="1">Belongs to the NAGSA dehydrogenase family. Type 1 subfamily.</text>
</comment>
<keyword id="KW-0028">Amino-acid biosynthesis</keyword>
<keyword id="KW-0055">Arginine biosynthesis</keyword>
<keyword id="KW-0963">Cytoplasm</keyword>
<keyword id="KW-0521">NADP</keyword>
<keyword id="KW-0560">Oxidoreductase</keyword>
<keyword id="KW-1185">Reference proteome</keyword>
<sequence>MTHKIAILGASGYTGAELVRLIAEHPNMEIVALSGERKAGQSMAEVFPHLRHLDLPVLCKIDEIDFAGVDLCFCALPHKTSQEVIRALPATLKIVDLSADFRLRDPEAYRTWYGNEHVALEQQAEAVYGLTEFYRDQIRTARLVAGTGCNAATGQYVLRPLIAAGVIDLDEIILDLKCAVSGAGRSLKENLLHAELSEGANAYAVGGTHRHLGEFDQEFSALAGRPVQVQFTPHLIPANRGILATTYVRGDAQTVFQTLAAAYADEPFVHVLPFGETPSTHHVRGSNHCHIGVTGDRIAGRAIVIAALDNLTKGSSGQALQNANLMLGETETTGLTMAPLFP</sequence>
<accession>Q5LS92</accession>
<reference key="1">
    <citation type="journal article" date="2004" name="Nature">
        <title>Genome sequence of Silicibacter pomeroyi reveals adaptations to the marine environment.</title>
        <authorList>
            <person name="Moran M.A."/>
            <person name="Buchan A."/>
            <person name="Gonzalez J.M."/>
            <person name="Heidelberg J.F."/>
            <person name="Whitman W.B."/>
            <person name="Kiene R.P."/>
            <person name="Henriksen J.R."/>
            <person name="King G.M."/>
            <person name="Belas R."/>
            <person name="Fuqua C."/>
            <person name="Brinkac L.M."/>
            <person name="Lewis M."/>
            <person name="Johri S."/>
            <person name="Weaver B."/>
            <person name="Pai G."/>
            <person name="Eisen J.A."/>
            <person name="Rahe E."/>
            <person name="Sheldon W.M."/>
            <person name="Ye W."/>
            <person name="Miller T.R."/>
            <person name="Carlton J."/>
            <person name="Rasko D.A."/>
            <person name="Paulsen I.T."/>
            <person name="Ren Q."/>
            <person name="Daugherty S.C."/>
            <person name="DeBoy R.T."/>
            <person name="Dodson R.J."/>
            <person name="Durkin A.S."/>
            <person name="Madupu R."/>
            <person name="Nelson W.C."/>
            <person name="Sullivan S.A."/>
            <person name="Rosovitz M.J."/>
            <person name="Haft D.H."/>
            <person name="Selengut J."/>
            <person name="Ward N."/>
        </authorList>
    </citation>
    <scope>NUCLEOTIDE SEQUENCE [LARGE SCALE GENOMIC DNA]</scope>
    <source>
        <strain>ATCC 700808 / DSM 15171 / DSS-3</strain>
    </source>
</reference>
<reference key="2">
    <citation type="journal article" date="2014" name="Stand. Genomic Sci.">
        <title>An updated genome annotation for the model marine bacterium Ruegeria pomeroyi DSS-3.</title>
        <authorList>
            <person name="Rivers A.R."/>
            <person name="Smith C.B."/>
            <person name="Moran M.A."/>
        </authorList>
    </citation>
    <scope>GENOME REANNOTATION</scope>
    <source>
        <strain>ATCC 700808 / DSM 15171 / DSS-3</strain>
    </source>
</reference>
<feature type="chain" id="PRO_0000112447" description="N-acetyl-gamma-glutamyl-phosphate reductase">
    <location>
        <begin position="1"/>
        <end position="342"/>
    </location>
</feature>
<feature type="active site" evidence="1">
    <location>
        <position position="149"/>
    </location>
</feature>
<evidence type="ECO:0000255" key="1">
    <source>
        <dbReference type="HAMAP-Rule" id="MF_00150"/>
    </source>
</evidence>
<organism>
    <name type="scientific">Ruegeria pomeroyi (strain ATCC 700808 / DSM 15171 / DSS-3)</name>
    <name type="common">Silicibacter pomeroyi</name>
    <dbReference type="NCBI Taxonomy" id="246200"/>
    <lineage>
        <taxon>Bacteria</taxon>
        <taxon>Pseudomonadati</taxon>
        <taxon>Pseudomonadota</taxon>
        <taxon>Alphaproteobacteria</taxon>
        <taxon>Rhodobacterales</taxon>
        <taxon>Roseobacteraceae</taxon>
        <taxon>Ruegeria</taxon>
    </lineage>
</organism>
<gene>
    <name evidence="1" type="primary">argC</name>
    <name type="ordered locus">SPO1876</name>
</gene>
<protein>
    <recommendedName>
        <fullName evidence="1">N-acetyl-gamma-glutamyl-phosphate reductase</fullName>
        <shortName evidence="1">AGPR</shortName>
        <ecNumber evidence="1">1.2.1.38</ecNumber>
    </recommendedName>
    <alternativeName>
        <fullName evidence="1">N-acetyl-glutamate semialdehyde dehydrogenase</fullName>
        <shortName evidence="1">NAGSA dehydrogenase</shortName>
    </alternativeName>
</protein>
<proteinExistence type="inferred from homology"/>